<organism>
    <name type="scientific">Cereibacter sphaeroides (strain ATCC 17023 / DSM 158 / JCM 6121 / CCUG 31486 / LMG 2827 / NBRC 12203 / NCIMB 8253 / ATH 2.4.1.)</name>
    <name type="common">Rhodobacter sphaeroides</name>
    <dbReference type="NCBI Taxonomy" id="272943"/>
    <lineage>
        <taxon>Bacteria</taxon>
        <taxon>Pseudomonadati</taxon>
        <taxon>Pseudomonadota</taxon>
        <taxon>Alphaproteobacteria</taxon>
        <taxon>Rhodobacterales</taxon>
        <taxon>Paracoccaceae</taxon>
        <taxon>Cereibacter</taxon>
    </lineage>
</organism>
<accession>Q3J460</accession>
<reference key="1">
    <citation type="submission" date="2005-09" db="EMBL/GenBank/DDBJ databases">
        <title>Complete sequence of chromosome 1 of Rhodobacter sphaeroides 2.4.1.</title>
        <authorList>
            <person name="Copeland A."/>
            <person name="Lucas S."/>
            <person name="Lapidus A."/>
            <person name="Barry K."/>
            <person name="Detter J.C."/>
            <person name="Glavina T."/>
            <person name="Hammon N."/>
            <person name="Israni S."/>
            <person name="Pitluck S."/>
            <person name="Richardson P."/>
            <person name="Mackenzie C."/>
            <person name="Choudhary M."/>
            <person name="Larimer F."/>
            <person name="Hauser L.J."/>
            <person name="Land M."/>
            <person name="Donohue T.J."/>
            <person name="Kaplan S."/>
        </authorList>
    </citation>
    <scope>NUCLEOTIDE SEQUENCE [LARGE SCALE GENOMIC DNA]</scope>
    <source>
        <strain>ATCC 17023 / DSM 158 / JCM 6121 / CCUG 31486 / LMG 2827 / NBRC 12203 / NCIMB 8253 / ATH 2.4.1.</strain>
    </source>
</reference>
<proteinExistence type="inferred from homology"/>
<comment type="function">
    <text evidence="1">Allows the formation of correctly charged Asn-tRNA(Asn) or Gln-tRNA(Gln) through the transamidation of misacylated Asp-tRNA(Asn) or Glu-tRNA(Gln) in organisms which lack either or both of asparaginyl-tRNA or glutaminyl-tRNA synthetases. The reaction takes place in the presence of glutamine and ATP through an activated phospho-Asp-tRNA(Asn) or phospho-Glu-tRNA(Gln).</text>
</comment>
<comment type="catalytic activity">
    <reaction evidence="1">
        <text>L-glutamyl-tRNA(Gln) + L-glutamine + ATP + H2O = L-glutaminyl-tRNA(Gln) + L-glutamate + ADP + phosphate + H(+)</text>
        <dbReference type="Rhea" id="RHEA:17521"/>
        <dbReference type="Rhea" id="RHEA-COMP:9681"/>
        <dbReference type="Rhea" id="RHEA-COMP:9684"/>
        <dbReference type="ChEBI" id="CHEBI:15377"/>
        <dbReference type="ChEBI" id="CHEBI:15378"/>
        <dbReference type="ChEBI" id="CHEBI:29985"/>
        <dbReference type="ChEBI" id="CHEBI:30616"/>
        <dbReference type="ChEBI" id="CHEBI:43474"/>
        <dbReference type="ChEBI" id="CHEBI:58359"/>
        <dbReference type="ChEBI" id="CHEBI:78520"/>
        <dbReference type="ChEBI" id="CHEBI:78521"/>
        <dbReference type="ChEBI" id="CHEBI:456216"/>
    </reaction>
</comment>
<comment type="catalytic activity">
    <reaction evidence="1">
        <text>L-aspartyl-tRNA(Asn) + L-glutamine + ATP + H2O = L-asparaginyl-tRNA(Asn) + L-glutamate + ADP + phosphate + 2 H(+)</text>
        <dbReference type="Rhea" id="RHEA:14513"/>
        <dbReference type="Rhea" id="RHEA-COMP:9674"/>
        <dbReference type="Rhea" id="RHEA-COMP:9677"/>
        <dbReference type="ChEBI" id="CHEBI:15377"/>
        <dbReference type="ChEBI" id="CHEBI:15378"/>
        <dbReference type="ChEBI" id="CHEBI:29985"/>
        <dbReference type="ChEBI" id="CHEBI:30616"/>
        <dbReference type="ChEBI" id="CHEBI:43474"/>
        <dbReference type="ChEBI" id="CHEBI:58359"/>
        <dbReference type="ChEBI" id="CHEBI:78515"/>
        <dbReference type="ChEBI" id="CHEBI:78516"/>
        <dbReference type="ChEBI" id="CHEBI:456216"/>
    </reaction>
</comment>
<comment type="subunit">
    <text evidence="1">Heterotrimer of A, B and C subunits.</text>
</comment>
<comment type="similarity">
    <text evidence="1">Belongs to the GatC family.</text>
</comment>
<feature type="chain" id="PRO_1000016198" description="Aspartyl/glutamyl-tRNA(Asn/Gln) amidotransferase subunit C">
    <location>
        <begin position="1"/>
        <end position="95"/>
    </location>
</feature>
<dbReference type="EC" id="6.3.5.-" evidence="1"/>
<dbReference type="EMBL" id="CP000143">
    <property type="protein sequence ID" value="ABA78424.1"/>
    <property type="molecule type" value="Genomic_DNA"/>
</dbReference>
<dbReference type="RefSeq" id="WP_002719430.1">
    <property type="nucleotide sequence ID" value="NZ_CP030271.1"/>
</dbReference>
<dbReference type="RefSeq" id="YP_352325.1">
    <property type="nucleotide sequence ID" value="NC_007493.2"/>
</dbReference>
<dbReference type="SMR" id="Q3J460"/>
<dbReference type="STRING" id="272943.RSP_6043"/>
<dbReference type="EnsemblBacteria" id="ABA78424">
    <property type="protein sequence ID" value="ABA78424"/>
    <property type="gene ID" value="RSP_6043"/>
</dbReference>
<dbReference type="GeneID" id="67446042"/>
<dbReference type="KEGG" id="rsp:RSP_6043"/>
<dbReference type="PATRIC" id="fig|272943.9.peg.1174"/>
<dbReference type="eggNOG" id="COG0721">
    <property type="taxonomic scope" value="Bacteria"/>
</dbReference>
<dbReference type="OrthoDB" id="9794326at2"/>
<dbReference type="PhylomeDB" id="Q3J460"/>
<dbReference type="Proteomes" id="UP000002703">
    <property type="component" value="Chromosome 1"/>
</dbReference>
<dbReference type="GO" id="GO:0050566">
    <property type="term" value="F:asparaginyl-tRNA synthase (glutamine-hydrolyzing) activity"/>
    <property type="evidence" value="ECO:0007669"/>
    <property type="project" value="RHEA"/>
</dbReference>
<dbReference type="GO" id="GO:0005524">
    <property type="term" value="F:ATP binding"/>
    <property type="evidence" value="ECO:0007669"/>
    <property type="project" value="UniProtKB-KW"/>
</dbReference>
<dbReference type="GO" id="GO:0050567">
    <property type="term" value="F:glutaminyl-tRNA synthase (glutamine-hydrolyzing) activity"/>
    <property type="evidence" value="ECO:0007669"/>
    <property type="project" value="UniProtKB-UniRule"/>
</dbReference>
<dbReference type="GO" id="GO:0070681">
    <property type="term" value="P:glutaminyl-tRNAGln biosynthesis via transamidation"/>
    <property type="evidence" value="ECO:0007669"/>
    <property type="project" value="TreeGrafter"/>
</dbReference>
<dbReference type="GO" id="GO:0006450">
    <property type="term" value="P:regulation of translational fidelity"/>
    <property type="evidence" value="ECO:0007669"/>
    <property type="project" value="InterPro"/>
</dbReference>
<dbReference type="GO" id="GO:0006412">
    <property type="term" value="P:translation"/>
    <property type="evidence" value="ECO:0007669"/>
    <property type="project" value="UniProtKB-UniRule"/>
</dbReference>
<dbReference type="Gene3D" id="1.10.20.60">
    <property type="entry name" value="Glu-tRNAGln amidotransferase C subunit, N-terminal domain"/>
    <property type="match status" value="1"/>
</dbReference>
<dbReference type="HAMAP" id="MF_00122">
    <property type="entry name" value="GatC"/>
    <property type="match status" value="1"/>
</dbReference>
<dbReference type="InterPro" id="IPR036113">
    <property type="entry name" value="Asp/Glu-ADT_sf_sub_c"/>
</dbReference>
<dbReference type="InterPro" id="IPR003837">
    <property type="entry name" value="GatC"/>
</dbReference>
<dbReference type="NCBIfam" id="TIGR00135">
    <property type="entry name" value="gatC"/>
    <property type="match status" value="1"/>
</dbReference>
<dbReference type="PANTHER" id="PTHR15004">
    <property type="entry name" value="GLUTAMYL-TRNA(GLN) AMIDOTRANSFERASE SUBUNIT C, MITOCHONDRIAL"/>
    <property type="match status" value="1"/>
</dbReference>
<dbReference type="PANTHER" id="PTHR15004:SF0">
    <property type="entry name" value="GLUTAMYL-TRNA(GLN) AMIDOTRANSFERASE SUBUNIT C, MITOCHONDRIAL"/>
    <property type="match status" value="1"/>
</dbReference>
<dbReference type="Pfam" id="PF02686">
    <property type="entry name" value="GatC"/>
    <property type="match status" value="1"/>
</dbReference>
<dbReference type="SUPFAM" id="SSF141000">
    <property type="entry name" value="Glu-tRNAGln amidotransferase C subunit"/>
    <property type="match status" value="1"/>
</dbReference>
<name>GATC_CERS4</name>
<gene>
    <name evidence="1" type="primary">gatC</name>
    <name type="ordered locus">RHOS4_08560</name>
    <name type="ORF">RSP_6043</name>
</gene>
<evidence type="ECO:0000255" key="1">
    <source>
        <dbReference type="HAMAP-Rule" id="MF_00122"/>
    </source>
</evidence>
<keyword id="KW-0067">ATP-binding</keyword>
<keyword id="KW-0436">Ligase</keyword>
<keyword id="KW-0547">Nucleotide-binding</keyword>
<keyword id="KW-0648">Protein biosynthesis</keyword>
<keyword id="KW-1185">Reference proteome</keyword>
<sequence length="95" mass="10523">MSIDIETARRVAHLARIRVDEADLPALAGELSGILTFMEQLNEVDVEGIEPMTSVTPMRLKRRQDVVTDGDMQDKVLSNAPDAREGFFAVPKVVE</sequence>
<protein>
    <recommendedName>
        <fullName evidence="1">Aspartyl/glutamyl-tRNA(Asn/Gln) amidotransferase subunit C</fullName>
        <shortName evidence="1">Asp/Glu-ADT subunit C</shortName>
        <ecNumber evidence="1">6.3.5.-</ecNumber>
    </recommendedName>
</protein>